<protein>
    <recommendedName>
        <fullName>Low molecular weight protein-tyrosine-phosphatase PtpA</fullName>
        <ecNumber>3.1.3.48</ecNumber>
    </recommendedName>
    <alternativeName>
        <fullName>Phosphotyrosine phosphatase A</fullName>
        <shortName>PTPase A</shortName>
    </alternativeName>
</protein>
<dbReference type="EC" id="3.1.3.48"/>
<dbReference type="EMBL" id="BX571857">
    <property type="protein sequence ID" value="CAG43608.1"/>
    <property type="molecule type" value="Genomic_DNA"/>
</dbReference>
<dbReference type="RefSeq" id="WP_000228666.1">
    <property type="nucleotide sequence ID" value="NC_002953.3"/>
</dbReference>
<dbReference type="SMR" id="Q6G853"/>
<dbReference type="KEGG" id="sas:SAS1803"/>
<dbReference type="HOGENOM" id="CLU_071415_2_3_9"/>
<dbReference type="GO" id="GO:0005576">
    <property type="term" value="C:extracellular region"/>
    <property type="evidence" value="ECO:0007669"/>
    <property type="project" value="UniProtKB-SubCell"/>
</dbReference>
<dbReference type="GO" id="GO:0004725">
    <property type="term" value="F:protein tyrosine phosphatase activity"/>
    <property type="evidence" value="ECO:0007669"/>
    <property type="project" value="UniProtKB-EC"/>
</dbReference>
<dbReference type="CDD" id="cd16343">
    <property type="entry name" value="LMWPTP"/>
    <property type="match status" value="1"/>
</dbReference>
<dbReference type="FunFam" id="3.40.50.2300:FF:000268">
    <property type="entry name" value="Low molecular weight protein-tyrosine-phosphatase PtpA"/>
    <property type="match status" value="1"/>
</dbReference>
<dbReference type="Gene3D" id="3.40.50.2300">
    <property type="match status" value="1"/>
</dbReference>
<dbReference type="InterPro" id="IPR050438">
    <property type="entry name" value="LMW_PTPase"/>
</dbReference>
<dbReference type="InterPro" id="IPR023485">
    <property type="entry name" value="Ptyr_pPase"/>
</dbReference>
<dbReference type="InterPro" id="IPR036196">
    <property type="entry name" value="Ptyr_pPase_sf"/>
</dbReference>
<dbReference type="InterPro" id="IPR017867">
    <property type="entry name" value="Tyr_phospatase_low_mol_wt"/>
</dbReference>
<dbReference type="PANTHER" id="PTHR11717:SF7">
    <property type="entry name" value="LOW MOLECULAR WEIGHT PHOSPHOTYROSINE PROTEIN PHOSPHATASE"/>
    <property type="match status" value="1"/>
</dbReference>
<dbReference type="PANTHER" id="PTHR11717">
    <property type="entry name" value="LOW MOLECULAR WEIGHT PROTEIN TYROSINE PHOSPHATASE"/>
    <property type="match status" value="1"/>
</dbReference>
<dbReference type="Pfam" id="PF01451">
    <property type="entry name" value="LMWPc"/>
    <property type="match status" value="1"/>
</dbReference>
<dbReference type="PRINTS" id="PR00719">
    <property type="entry name" value="LMWPTPASE"/>
</dbReference>
<dbReference type="SMART" id="SM00226">
    <property type="entry name" value="LMWPc"/>
    <property type="match status" value="1"/>
</dbReference>
<dbReference type="SUPFAM" id="SSF52788">
    <property type="entry name" value="Phosphotyrosine protein phosphatases I"/>
    <property type="match status" value="1"/>
</dbReference>
<accession>Q6G853</accession>
<organism>
    <name type="scientific">Staphylococcus aureus (strain MSSA476)</name>
    <dbReference type="NCBI Taxonomy" id="282459"/>
    <lineage>
        <taxon>Bacteria</taxon>
        <taxon>Bacillati</taxon>
        <taxon>Bacillota</taxon>
        <taxon>Bacilli</taxon>
        <taxon>Bacillales</taxon>
        <taxon>Staphylococcaceae</taxon>
        <taxon>Staphylococcus</taxon>
    </lineage>
</organism>
<feature type="chain" id="PRO_0000300660" description="Low molecular weight protein-tyrosine-phosphatase PtpA">
    <location>
        <begin position="1"/>
        <end position="154"/>
    </location>
</feature>
<feature type="active site" description="Nucleophile" evidence="2">
    <location>
        <position position="8"/>
    </location>
</feature>
<feature type="active site" evidence="2">
    <location>
        <position position="14"/>
    </location>
</feature>
<feature type="active site" description="Proton donor" evidence="2">
    <location>
        <position position="120"/>
    </location>
</feature>
<name>PTPA_STAAS</name>
<sequence>MVDVAFVCLGNICRSPMAEAIMRQRLKDRNIHDIKVHSRGTGSWNLGEPPHEGTQKILNKHNIPFDGMISELFEATDDFDYIVAMDQSNVDNIKSINPNLKGQLFKLLEFSNMEESDVPDPYYTNNFEGVYDMVLSSCDNLIDYIVKDANLKEG</sequence>
<keyword id="KW-0378">Hydrolase</keyword>
<keyword id="KW-0597">Phosphoprotein</keyword>
<keyword id="KW-0904">Protein phosphatase</keyword>
<keyword id="KW-0964">Secreted</keyword>
<reference key="1">
    <citation type="journal article" date="2004" name="Proc. Natl. Acad. Sci. U.S.A.">
        <title>Complete genomes of two clinical Staphylococcus aureus strains: evidence for the rapid evolution of virulence and drug resistance.</title>
        <authorList>
            <person name="Holden M.T.G."/>
            <person name="Feil E.J."/>
            <person name="Lindsay J.A."/>
            <person name="Peacock S.J."/>
            <person name="Day N.P.J."/>
            <person name="Enright M.C."/>
            <person name="Foster T.J."/>
            <person name="Moore C.E."/>
            <person name="Hurst L."/>
            <person name="Atkin R."/>
            <person name="Barron A."/>
            <person name="Bason N."/>
            <person name="Bentley S.D."/>
            <person name="Chillingworth C."/>
            <person name="Chillingworth T."/>
            <person name="Churcher C."/>
            <person name="Clark L."/>
            <person name="Corton C."/>
            <person name="Cronin A."/>
            <person name="Doggett J."/>
            <person name="Dowd L."/>
            <person name="Feltwell T."/>
            <person name="Hance Z."/>
            <person name="Harris B."/>
            <person name="Hauser H."/>
            <person name="Holroyd S."/>
            <person name="Jagels K."/>
            <person name="James K.D."/>
            <person name="Lennard N."/>
            <person name="Line A."/>
            <person name="Mayes R."/>
            <person name="Moule S."/>
            <person name="Mungall K."/>
            <person name="Ormond D."/>
            <person name="Quail M.A."/>
            <person name="Rabbinowitsch E."/>
            <person name="Rutherford K.M."/>
            <person name="Sanders M."/>
            <person name="Sharp S."/>
            <person name="Simmonds M."/>
            <person name="Stevens K."/>
            <person name="Whitehead S."/>
            <person name="Barrell B.G."/>
            <person name="Spratt B.G."/>
            <person name="Parkhill J."/>
        </authorList>
    </citation>
    <scope>NUCLEOTIDE SEQUENCE [LARGE SCALE GENOMIC DNA]</scope>
    <source>
        <strain>MSSA476</strain>
    </source>
</reference>
<gene>
    <name type="primary">ptpA</name>
    <name type="ordered locus">SAS1803</name>
</gene>
<proteinExistence type="inferred from homology"/>
<evidence type="ECO:0000250" key="1">
    <source>
        <dbReference type="UniProtKB" id="A0A0H3K9F2"/>
    </source>
</evidence>
<evidence type="ECO:0000250" key="2">
    <source>
        <dbReference type="UniProtKB" id="P11064"/>
    </source>
</evidence>
<evidence type="ECO:0000305" key="3"/>
<comment type="function">
    <text evidence="1">Secreted tyrosine phosphatase that plays a critical role during infection as a bacterial effector protein that counteracts host defenses. Required for intramacrophage survival.</text>
</comment>
<comment type="catalytic activity">
    <reaction evidence="1">
        <text>O-phospho-L-tyrosyl-[protein] + H2O = L-tyrosyl-[protein] + phosphate</text>
        <dbReference type="Rhea" id="RHEA:10684"/>
        <dbReference type="Rhea" id="RHEA-COMP:10136"/>
        <dbReference type="Rhea" id="RHEA-COMP:20101"/>
        <dbReference type="ChEBI" id="CHEBI:15377"/>
        <dbReference type="ChEBI" id="CHEBI:43474"/>
        <dbReference type="ChEBI" id="CHEBI:46858"/>
        <dbReference type="ChEBI" id="CHEBI:61978"/>
        <dbReference type="EC" id="3.1.3.48"/>
    </reaction>
</comment>
<comment type="subunit">
    <text evidence="1">Interacts with host CORO1A.</text>
</comment>
<comment type="subcellular location">
    <subcellularLocation>
        <location evidence="1">Secreted</location>
    </subcellularLocation>
    <text evidence="1">Secreted intracellularly upon bacterial infection of macrophages.</text>
</comment>
<comment type="PTM">
    <text evidence="1">Phosphorylations at Tyr-122 and Tyr-123 are essential for phosphatase activity.</text>
</comment>
<comment type="similarity">
    <text evidence="3">Belongs to the low molecular weight phosphotyrosine protein phosphatase family.</text>
</comment>